<sequence length="108" mass="12400">MPKPGILKSKSMFCVIYRSSKRDQTYLYVEKKDDFSRVPEELMKGFGQPQLAMILPLDGRKKLVNADIEKVKLALTEQGYYLQLPPPPEDLLKQHLSVMGQKTDDTNK</sequence>
<proteinExistence type="inferred from homology"/>
<reference key="1">
    <citation type="journal article" date="2008" name="DNA Res.">
        <title>Complete genome sequence and comparative analysis of the wild-type commensal Escherichia coli strain SE11 isolated from a healthy adult.</title>
        <authorList>
            <person name="Oshima K."/>
            <person name="Toh H."/>
            <person name="Ogura Y."/>
            <person name="Sasamoto H."/>
            <person name="Morita H."/>
            <person name="Park S.-H."/>
            <person name="Ooka T."/>
            <person name="Iyoda S."/>
            <person name="Taylor T.D."/>
            <person name="Hayashi T."/>
            <person name="Itoh K."/>
            <person name="Hattori M."/>
        </authorList>
    </citation>
    <scope>NUCLEOTIDE SEQUENCE [LARGE SCALE GENOMIC DNA]</scope>
    <source>
        <strain>SE11</strain>
    </source>
</reference>
<protein>
    <recommendedName>
        <fullName evidence="1">Protein YcgL</fullName>
    </recommendedName>
</protein>
<feature type="chain" id="PRO_0000375292" description="Protein YcgL">
    <location>
        <begin position="1"/>
        <end position="108"/>
    </location>
</feature>
<feature type="domain" description="YcgL" evidence="1">
    <location>
        <begin position="12"/>
        <end position="96"/>
    </location>
</feature>
<gene>
    <name evidence="1" type="primary">ycgL</name>
    <name type="ordered locus">ECSE_1226</name>
</gene>
<evidence type="ECO:0000255" key="1">
    <source>
        <dbReference type="HAMAP-Rule" id="MF_01866"/>
    </source>
</evidence>
<organism>
    <name type="scientific">Escherichia coli (strain SE11)</name>
    <dbReference type="NCBI Taxonomy" id="409438"/>
    <lineage>
        <taxon>Bacteria</taxon>
        <taxon>Pseudomonadati</taxon>
        <taxon>Pseudomonadota</taxon>
        <taxon>Gammaproteobacteria</taxon>
        <taxon>Enterobacterales</taxon>
        <taxon>Enterobacteriaceae</taxon>
        <taxon>Escherichia</taxon>
    </lineage>
</organism>
<name>YCGL_ECOSE</name>
<dbReference type="EMBL" id="AP009240">
    <property type="protein sequence ID" value="BAG76750.1"/>
    <property type="molecule type" value="Genomic_DNA"/>
</dbReference>
<dbReference type="SMR" id="B6I9N9"/>
<dbReference type="KEGG" id="ecy:ECSE_1226"/>
<dbReference type="HOGENOM" id="CLU_155118_1_0_6"/>
<dbReference type="Proteomes" id="UP000008199">
    <property type="component" value="Chromosome"/>
</dbReference>
<dbReference type="Gene3D" id="3.10.510.20">
    <property type="entry name" value="YcgL domain"/>
    <property type="match status" value="1"/>
</dbReference>
<dbReference type="HAMAP" id="MF_01866">
    <property type="entry name" value="UPF0745"/>
    <property type="match status" value="1"/>
</dbReference>
<dbReference type="InterPro" id="IPR038068">
    <property type="entry name" value="YcgL-like_sf"/>
</dbReference>
<dbReference type="InterPro" id="IPR027354">
    <property type="entry name" value="YcgL_dom"/>
</dbReference>
<dbReference type="PANTHER" id="PTHR38109">
    <property type="entry name" value="PROTEIN YCGL"/>
    <property type="match status" value="1"/>
</dbReference>
<dbReference type="PANTHER" id="PTHR38109:SF1">
    <property type="entry name" value="PROTEIN YCGL"/>
    <property type="match status" value="1"/>
</dbReference>
<dbReference type="Pfam" id="PF05166">
    <property type="entry name" value="YcgL"/>
    <property type="match status" value="1"/>
</dbReference>
<dbReference type="SUPFAM" id="SSF160191">
    <property type="entry name" value="YcgL-like"/>
    <property type="match status" value="1"/>
</dbReference>
<dbReference type="PROSITE" id="PS51648">
    <property type="entry name" value="YCGL"/>
    <property type="match status" value="1"/>
</dbReference>
<accession>B6I9N9</accession>